<organism evidence="6">
    <name type="scientific">Plasmodium berghei (strain Anka)</name>
    <dbReference type="NCBI Taxonomy" id="5823"/>
    <lineage>
        <taxon>Eukaryota</taxon>
        <taxon>Sar</taxon>
        <taxon>Alveolata</taxon>
        <taxon>Apicomplexa</taxon>
        <taxon>Aconoidasida</taxon>
        <taxon>Haemosporida</taxon>
        <taxon>Plasmodiidae</taxon>
        <taxon>Plasmodium</taxon>
        <taxon>Plasmodium (Vinckeia)</taxon>
    </lineage>
</organism>
<sequence>MIEKSNNIYLSIDPIVERIKKNGEELPLINSEKKGIDYTQIVVYLVGLSDGLIHLASLAIYYLFKDHYRLTPYQVSLILMYPYLPFILKPIIALITDSISIFGMRRKPYLFLFSLFQSLNFLSLALVDLSLIQATLVLFFISLCASFCTTVAEALVVESSIGKTYSQGTNKVTEFIASKAVGSLSVAYFSGYFLEKVSREYIFMATSIFPLIISISCLFLKEKEYVTRKNIFKQMTDLIKFINTPVFIGPFLYIFVYMSGPDYDDAFFFFCTNKLGFRPSFMGTLRLTYGIASLIGIIVYRVFLKNSSLRNTLIFTTLVSFPIYISPIILTEKINKYFGISNELFVLSGGFLIEAITEIQLLPLFILTANICQEGLEASVFATILSVKNLGSLTKKGTSSLLTYLMKIDTYNFDNLSMYILTCGLFLLLSLSLVPLLPSEDQIESLKNKKIQK</sequence>
<gene>
    <name evidence="5" type="ORF">PBANKA_0931500</name>
</gene>
<name>FT2_PLABA</name>
<protein>
    <recommendedName>
        <fullName evidence="4">Putative folate transporter 2</fullName>
        <shortName evidence="3">PbFT2</shortName>
    </recommendedName>
    <alternativeName>
        <fullName evidence="3">Apicoplast-resident folate transporter</fullName>
    </alternativeName>
</protein>
<comment type="function">
    <text evidence="2 4">Putative folate transporter (Probable). Required for sporogony of malaria parasites and host switching (PubMed:32975363).</text>
</comment>
<comment type="subcellular location">
    <subcellularLocation>
        <location evidence="2">Plastid</location>
        <location evidence="2">Apicoplast</location>
    </subcellularLocation>
    <subcellularLocation>
        <location evidence="1">Membrane</location>
        <topology evidence="1">Multi-pass membrane protein</topology>
    </subcellularLocation>
    <text evidence="2">Localizes to the apicoplast and to the apex of invasive parasite stages.</text>
</comment>
<comment type="disruption phenotype">
    <text evidence="2">Gene deletion does not affect asexual proliferation and sexual development of parasites in the mammalian bloodstream and parasite progression through liver stages (PubMed:32975363). Following transmission to Anopheles stephensi mosquitoes, by day 17 after the blood meal, gene deletion results in oocyst swelling and formation of unusual intracellular pulps consisting of numerous single-membrane vesicles, which ultimately fuse to form large cavities (PubMed:32975363). The apicoplast and mitochondrion are highly branched and spread throughout the oocyst cytoplasm and are excluded from the intraparasitic accumulations (PubMed:32975363). Aberrant sporoblast formation caused by abnormal vesicular traffic (PubMed:32975363). Complete block of parasite transmission to mice (PubMed:32975363).</text>
</comment>
<comment type="similarity">
    <text evidence="4">Belongs to the major facilitator superfamily. Folate-biopterin transporter (TC 2.A.71) family.</text>
</comment>
<evidence type="ECO:0000255" key="1"/>
<evidence type="ECO:0000269" key="2">
    <source>
    </source>
</evidence>
<evidence type="ECO:0000303" key="3">
    <source>
    </source>
</evidence>
<evidence type="ECO:0000305" key="4"/>
<evidence type="ECO:0000312" key="5">
    <source>
        <dbReference type="EMBL" id="VUC55855.1"/>
    </source>
</evidence>
<evidence type="ECO:0000312" key="6">
    <source>
        <dbReference type="Proteomes" id="UP000074855"/>
    </source>
</evidence>
<reference evidence="6" key="1">
    <citation type="journal article" date="2014" name="BMC Biol.">
        <title>A comprehensive evaluation of rodent malaria parasite genomes and gene expression.</title>
        <authorList>
            <person name="Otto T.D."/>
            <person name="Bohme U."/>
            <person name="Jackson A.P."/>
            <person name="Hunt M."/>
            <person name="Franke-Fayard B."/>
            <person name="Hoeijmakers W.A."/>
            <person name="Religa A.A."/>
            <person name="Robertson L."/>
            <person name="Sanders M."/>
            <person name="Ogun S.A."/>
            <person name="Cunningham D."/>
            <person name="Erhart A."/>
            <person name="Billker O."/>
            <person name="Khan S.M."/>
            <person name="Stunnenberg H.G."/>
            <person name="Langhorne J."/>
            <person name="Holder A.A."/>
            <person name="Waters A.P."/>
            <person name="Newbold C.I."/>
            <person name="Pain A."/>
            <person name="Berriman M."/>
            <person name="Janse C.J."/>
        </authorList>
    </citation>
    <scope>NUCLEOTIDE SEQUENCE [LARGE SCALE GENOMIC DNA]</scope>
    <source>
        <strain evidence="6">ANKA</strain>
    </source>
</reference>
<reference evidence="4" key="2">
    <citation type="journal article" date="2021" name="Cell. Microbiol.">
        <title>An apicoplast-resident folate transporter is essential for sporogony of malaria parasites.</title>
        <authorList>
            <person name="Korbmacher F."/>
            <person name="Drepper B."/>
            <person name="Sanderson T."/>
            <person name="Martin P."/>
            <person name="Stach T."/>
            <person name="Maier A.G."/>
            <person name="Matuschewski K."/>
            <person name="Matz J.M."/>
        </authorList>
    </citation>
    <scope>FUNCTION</scope>
    <scope>SUBCELLULAR LOCATION</scope>
    <scope>DISRUPTION PHENOTYPE</scope>
    <source>
        <strain evidence="3">ANKA</strain>
    </source>
</reference>
<dbReference type="EMBL" id="LK023124">
    <property type="protein sequence ID" value="VUC55855.1"/>
    <property type="molecule type" value="Genomic_DNA"/>
</dbReference>
<dbReference type="RefSeq" id="XP_034421665.1">
    <property type="nucleotide sequence ID" value="XM_034564916.1"/>
</dbReference>
<dbReference type="FunCoup" id="A0A509AM18">
    <property type="interactions" value="1"/>
</dbReference>
<dbReference type="STRING" id="5823.A0A509AM18"/>
<dbReference type="GeneID" id="55149770"/>
<dbReference type="VEuPathDB" id="PlasmoDB:PBANKA_0931500"/>
<dbReference type="InParanoid" id="A0A509AM18"/>
<dbReference type="OMA" id="SREYIFM"/>
<dbReference type="Proteomes" id="UP000074855">
    <property type="component" value="Chromosome 9"/>
</dbReference>
<dbReference type="GO" id="GO:0020011">
    <property type="term" value="C:apicoplast"/>
    <property type="evidence" value="ECO:0007669"/>
    <property type="project" value="UniProtKB-SubCell"/>
</dbReference>
<dbReference type="GO" id="GO:0016020">
    <property type="term" value="C:membrane"/>
    <property type="evidence" value="ECO:0007669"/>
    <property type="project" value="UniProtKB-SubCell"/>
</dbReference>
<dbReference type="CDD" id="cd17484">
    <property type="entry name" value="MFS_FBT"/>
    <property type="match status" value="1"/>
</dbReference>
<dbReference type="Gene3D" id="1.20.1250.20">
    <property type="entry name" value="MFS general substrate transporter like domains"/>
    <property type="match status" value="1"/>
</dbReference>
<dbReference type="InterPro" id="IPR039309">
    <property type="entry name" value="BT1"/>
</dbReference>
<dbReference type="InterPro" id="IPR036259">
    <property type="entry name" value="MFS_trans_sf"/>
</dbReference>
<dbReference type="PANTHER" id="PTHR31585">
    <property type="entry name" value="FOLATE-BIOPTERIN TRANSPORTER 1, CHLOROPLASTIC"/>
    <property type="match status" value="1"/>
</dbReference>
<dbReference type="PANTHER" id="PTHR31585:SF0">
    <property type="entry name" value="FOLATE-BIOPTERIN TRANSPORTER 1, CHLOROPLASTIC"/>
    <property type="match status" value="1"/>
</dbReference>
<dbReference type="Pfam" id="PF03092">
    <property type="entry name" value="BT1"/>
    <property type="match status" value="1"/>
</dbReference>
<dbReference type="SUPFAM" id="SSF103473">
    <property type="entry name" value="MFS general substrate transporter"/>
    <property type="match status" value="1"/>
</dbReference>
<accession>A0A509AM18</accession>
<keyword id="KW-0933">Apicoplast</keyword>
<keyword id="KW-0472">Membrane</keyword>
<keyword id="KW-0934">Plastid</keyword>
<keyword id="KW-1185">Reference proteome</keyword>
<keyword id="KW-0812">Transmembrane</keyword>
<keyword id="KW-1133">Transmembrane helix</keyword>
<keyword id="KW-0813">Transport</keyword>
<proteinExistence type="inferred from homology"/>
<feature type="chain" id="PRO_0000461662" description="Putative folate transporter 2">
    <location>
        <begin position="1"/>
        <end position="453"/>
    </location>
</feature>
<feature type="transmembrane region" description="Helical" evidence="1">
    <location>
        <begin position="41"/>
        <end position="64"/>
    </location>
</feature>
<feature type="transmembrane region" description="Helical" evidence="1">
    <location>
        <begin position="76"/>
        <end position="96"/>
    </location>
</feature>
<feature type="transmembrane region" description="Helical" evidence="1">
    <location>
        <begin position="108"/>
        <end position="126"/>
    </location>
</feature>
<feature type="transmembrane region" description="Helical" evidence="1">
    <location>
        <begin position="132"/>
        <end position="156"/>
    </location>
</feature>
<feature type="transmembrane region" description="Helical" evidence="1">
    <location>
        <begin position="176"/>
        <end position="195"/>
    </location>
</feature>
<feature type="transmembrane region" description="Helical" evidence="1">
    <location>
        <begin position="201"/>
        <end position="220"/>
    </location>
</feature>
<feature type="transmembrane region" description="Helical" evidence="1">
    <location>
        <begin position="241"/>
        <end position="260"/>
    </location>
</feature>
<feature type="transmembrane region" description="Helical" evidence="1">
    <location>
        <begin position="280"/>
        <end position="300"/>
    </location>
</feature>
<feature type="transmembrane region" description="Helical" evidence="1">
    <location>
        <begin position="312"/>
        <end position="330"/>
    </location>
</feature>
<feature type="transmembrane region" description="Helical" evidence="1">
    <location>
        <begin position="346"/>
        <end position="366"/>
    </location>
</feature>
<feature type="transmembrane region" description="Helical" evidence="1">
    <location>
        <begin position="416"/>
        <end position="437"/>
    </location>
</feature>